<accession>Q732E9</accession>
<feature type="chain" id="PRO_0000378210" description="Putative cysteine ligase BshC">
    <location>
        <begin position="1"/>
        <end position="538"/>
    </location>
</feature>
<feature type="coiled-coil region" evidence="1">
    <location>
        <begin position="460"/>
        <end position="484"/>
    </location>
</feature>
<reference key="1">
    <citation type="journal article" date="2004" name="Nucleic Acids Res.">
        <title>The genome sequence of Bacillus cereus ATCC 10987 reveals metabolic adaptations and a large plasmid related to Bacillus anthracis pXO1.</title>
        <authorList>
            <person name="Rasko D.A."/>
            <person name="Ravel J."/>
            <person name="Oekstad O.A."/>
            <person name="Helgason E."/>
            <person name="Cer R.Z."/>
            <person name="Jiang L."/>
            <person name="Shores K.A."/>
            <person name="Fouts D.E."/>
            <person name="Tourasse N.J."/>
            <person name="Angiuoli S.V."/>
            <person name="Kolonay J.F."/>
            <person name="Nelson W.C."/>
            <person name="Kolstoe A.-B."/>
            <person name="Fraser C.M."/>
            <person name="Read T.D."/>
        </authorList>
    </citation>
    <scope>NUCLEOTIDE SEQUENCE [LARGE SCALE GENOMIC DNA]</scope>
    <source>
        <strain>ATCC 10987 / NRS 248</strain>
    </source>
</reference>
<protein>
    <recommendedName>
        <fullName evidence="1">Putative cysteine ligase BshC</fullName>
        <ecNumber evidence="1">6.-.-.-</ecNumber>
    </recommendedName>
</protein>
<keyword id="KW-0175">Coiled coil</keyword>
<keyword id="KW-0436">Ligase</keyword>
<comment type="function">
    <text evidence="1">Involved in bacillithiol (BSH) biosynthesis. May catalyze the last step of the pathway, the addition of cysteine to glucosamine malate (GlcN-Mal) to generate BSH.</text>
</comment>
<comment type="similarity">
    <text evidence="1">Belongs to the BshC family.</text>
</comment>
<name>BSHC_BACC1</name>
<sequence>MEIKEISVPQQGVVADYMNGKKEIQSCFDYMLTEDAFKQRVQDLREREFFRQDLVAHLLEYNTKLQAGEATIQNVKALGDEDTYVVIAGQQAGLLTGPLYTIHKIISVLQLAKEKEESLGVKVVPVFWIAGEDHDMDEINHTFVTKNKKIKKTIFHDRNPKKASASESELSLEDCRKWIEEIFKTYPETNFTKDVLQFIDDSLGESNTYVDFFGHLIMKMFINSGLILVDSHHPELRKLEVPFFKQIISKYKEVQEGLHNQQEVIKELGYKPIIETKSNAVHIFMEIDNERVLLEDNQGKFVGKDGTYSFSYEELIEEMERSPERFSNNVVTRPLMQEYVFPTLAFIGGPGELAYWSELQQVFHTIGFRMPPVVPRITITYIERDIATDLHDLQLQESDPFLNNVDKLRENWLSNQIEEPIDERFVEAKKEIIDIHKSLQQFVKKIDPGLSSFAGKNEFKINEQIELLERMLKRNVEKKHEVELNKFRRIQFAIRPLGAPQERVWNVCYYLNQFGLDFVDRVMENSFSWNGKHHVIKL</sequence>
<organism>
    <name type="scientific">Bacillus cereus (strain ATCC 10987 / NRS 248)</name>
    <dbReference type="NCBI Taxonomy" id="222523"/>
    <lineage>
        <taxon>Bacteria</taxon>
        <taxon>Bacillati</taxon>
        <taxon>Bacillota</taxon>
        <taxon>Bacilli</taxon>
        <taxon>Bacillales</taxon>
        <taxon>Bacillaceae</taxon>
        <taxon>Bacillus</taxon>
        <taxon>Bacillus cereus group</taxon>
    </lineage>
</organism>
<proteinExistence type="inferred from homology"/>
<dbReference type="EC" id="6.-.-.-" evidence="1"/>
<dbReference type="EMBL" id="AE017194">
    <property type="protein sequence ID" value="AAS42868.1"/>
    <property type="molecule type" value="Genomic_DNA"/>
</dbReference>
<dbReference type="SMR" id="Q732E9"/>
<dbReference type="KEGG" id="bca:BCE_3965"/>
<dbReference type="HOGENOM" id="CLU_022249_1_0_9"/>
<dbReference type="Proteomes" id="UP000002527">
    <property type="component" value="Chromosome"/>
</dbReference>
<dbReference type="GO" id="GO:0016874">
    <property type="term" value="F:ligase activity"/>
    <property type="evidence" value="ECO:0007669"/>
    <property type="project" value="UniProtKB-UniRule"/>
</dbReference>
<dbReference type="HAMAP" id="MF_01867">
    <property type="entry name" value="BshC"/>
    <property type="match status" value="1"/>
</dbReference>
<dbReference type="InterPro" id="IPR011199">
    <property type="entry name" value="Bacillithiol_biosynth_BshC"/>
</dbReference>
<dbReference type="InterPro" id="IPR055399">
    <property type="entry name" value="CC_BshC"/>
</dbReference>
<dbReference type="InterPro" id="IPR055398">
    <property type="entry name" value="Rossmann-like_BshC"/>
</dbReference>
<dbReference type="NCBIfam" id="TIGR03998">
    <property type="entry name" value="thiol_BshC"/>
    <property type="match status" value="1"/>
</dbReference>
<dbReference type="Pfam" id="PF24850">
    <property type="entry name" value="CC_BshC"/>
    <property type="match status" value="1"/>
</dbReference>
<dbReference type="Pfam" id="PF10079">
    <property type="entry name" value="Rossmann-like_BshC"/>
    <property type="match status" value="1"/>
</dbReference>
<dbReference type="PIRSF" id="PIRSF012535">
    <property type="entry name" value="UCP012535"/>
    <property type="match status" value="1"/>
</dbReference>
<evidence type="ECO:0000255" key="1">
    <source>
        <dbReference type="HAMAP-Rule" id="MF_01867"/>
    </source>
</evidence>
<gene>
    <name evidence="1" type="primary">bshC</name>
    <name type="ordered locus">BCE_3965</name>
</gene>